<protein>
    <recommendedName>
        <fullName evidence="1">Uridylate kinase</fullName>
        <shortName evidence="1">UK</shortName>
        <ecNumber evidence="1">2.7.4.22</ecNumber>
    </recommendedName>
    <alternativeName>
        <fullName evidence="1">Uridine monophosphate kinase</fullName>
        <shortName evidence="1">UMP kinase</shortName>
        <shortName evidence="1">UMPK</shortName>
    </alternativeName>
</protein>
<organism>
    <name type="scientific">Pseudomonas fluorescens (strain ATCC BAA-477 / NRRL B-23932 / Pf-5)</name>
    <dbReference type="NCBI Taxonomy" id="220664"/>
    <lineage>
        <taxon>Bacteria</taxon>
        <taxon>Pseudomonadati</taxon>
        <taxon>Pseudomonadota</taxon>
        <taxon>Gammaproteobacteria</taxon>
        <taxon>Pseudomonadales</taxon>
        <taxon>Pseudomonadaceae</taxon>
        <taxon>Pseudomonas</taxon>
    </lineage>
</organism>
<name>PYRH_PSEF5</name>
<proteinExistence type="inferred from homology"/>
<accession>Q4KHH4</accession>
<feature type="chain" id="PRO_1000053983" description="Uridylate kinase">
    <location>
        <begin position="1"/>
        <end position="247"/>
    </location>
</feature>
<feature type="binding site" evidence="1">
    <location>
        <begin position="18"/>
        <end position="21"/>
    </location>
    <ligand>
        <name>ATP</name>
        <dbReference type="ChEBI" id="CHEBI:30616"/>
    </ligand>
</feature>
<feature type="binding site" evidence="1">
    <location>
        <position position="60"/>
    </location>
    <ligand>
        <name>UMP</name>
        <dbReference type="ChEBI" id="CHEBI:57865"/>
    </ligand>
</feature>
<feature type="binding site" evidence="1">
    <location>
        <position position="61"/>
    </location>
    <ligand>
        <name>ATP</name>
        <dbReference type="ChEBI" id="CHEBI:30616"/>
    </ligand>
</feature>
<feature type="binding site" evidence="1">
    <location>
        <position position="65"/>
    </location>
    <ligand>
        <name>ATP</name>
        <dbReference type="ChEBI" id="CHEBI:30616"/>
    </ligand>
</feature>
<feature type="binding site" evidence="1">
    <location>
        <position position="80"/>
    </location>
    <ligand>
        <name>UMP</name>
        <dbReference type="ChEBI" id="CHEBI:57865"/>
    </ligand>
</feature>
<feature type="binding site" evidence="1">
    <location>
        <begin position="141"/>
        <end position="148"/>
    </location>
    <ligand>
        <name>UMP</name>
        <dbReference type="ChEBI" id="CHEBI:57865"/>
    </ligand>
</feature>
<feature type="binding site" evidence="1">
    <location>
        <position position="168"/>
    </location>
    <ligand>
        <name>ATP</name>
        <dbReference type="ChEBI" id="CHEBI:30616"/>
    </ligand>
</feature>
<feature type="binding site" evidence="1">
    <location>
        <position position="174"/>
    </location>
    <ligand>
        <name>ATP</name>
        <dbReference type="ChEBI" id="CHEBI:30616"/>
    </ligand>
</feature>
<feature type="binding site" evidence="1">
    <location>
        <position position="177"/>
    </location>
    <ligand>
        <name>ATP</name>
        <dbReference type="ChEBI" id="CHEBI:30616"/>
    </ligand>
</feature>
<dbReference type="EC" id="2.7.4.22" evidence="1"/>
<dbReference type="EMBL" id="CP000076">
    <property type="protein sequence ID" value="AAY90465.1"/>
    <property type="molecule type" value="Genomic_DNA"/>
</dbReference>
<dbReference type="RefSeq" id="WP_011059526.1">
    <property type="nucleotide sequence ID" value="NC_004129.6"/>
</dbReference>
<dbReference type="SMR" id="Q4KHH4"/>
<dbReference type="STRING" id="220664.PFL_1178"/>
<dbReference type="GeneID" id="57474182"/>
<dbReference type="KEGG" id="pfl:PFL_1178"/>
<dbReference type="eggNOG" id="COG0528">
    <property type="taxonomic scope" value="Bacteria"/>
</dbReference>
<dbReference type="HOGENOM" id="CLU_033861_0_0_6"/>
<dbReference type="UniPathway" id="UPA00159">
    <property type="reaction ID" value="UER00275"/>
</dbReference>
<dbReference type="Proteomes" id="UP000008540">
    <property type="component" value="Chromosome"/>
</dbReference>
<dbReference type="GO" id="GO:0005829">
    <property type="term" value="C:cytosol"/>
    <property type="evidence" value="ECO:0007669"/>
    <property type="project" value="TreeGrafter"/>
</dbReference>
<dbReference type="GO" id="GO:0005524">
    <property type="term" value="F:ATP binding"/>
    <property type="evidence" value="ECO:0007669"/>
    <property type="project" value="UniProtKB-KW"/>
</dbReference>
<dbReference type="GO" id="GO:0033862">
    <property type="term" value="F:UMP kinase activity"/>
    <property type="evidence" value="ECO:0007669"/>
    <property type="project" value="UniProtKB-EC"/>
</dbReference>
<dbReference type="GO" id="GO:0044210">
    <property type="term" value="P:'de novo' CTP biosynthetic process"/>
    <property type="evidence" value="ECO:0007669"/>
    <property type="project" value="UniProtKB-UniRule"/>
</dbReference>
<dbReference type="GO" id="GO:0006225">
    <property type="term" value="P:UDP biosynthetic process"/>
    <property type="evidence" value="ECO:0007669"/>
    <property type="project" value="TreeGrafter"/>
</dbReference>
<dbReference type="CDD" id="cd04254">
    <property type="entry name" value="AAK_UMPK-PyrH-Ec"/>
    <property type="match status" value="1"/>
</dbReference>
<dbReference type="FunFam" id="3.40.1160.10:FF:000001">
    <property type="entry name" value="Uridylate kinase"/>
    <property type="match status" value="1"/>
</dbReference>
<dbReference type="Gene3D" id="3.40.1160.10">
    <property type="entry name" value="Acetylglutamate kinase-like"/>
    <property type="match status" value="1"/>
</dbReference>
<dbReference type="HAMAP" id="MF_01220_B">
    <property type="entry name" value="PyrH_B"/>
    <property type="match status" value="1"/>
</dbReference>
<dbReference type="InterPro" id="IPR036393">
    <property type="entry name" value="AceGlu_kinase-like_sf"/>
</dbReference>
<dbReference type="InterPro" id="IPR001048">
    <property type="entry name" value="Asp/Glu/Uridylate_kinase"/>
</dbReference>
<dbReference type="InterPro" id="IPR011817">
    <property type="entry name" value="Uridylate_kinase"/>
</dbReference>
<dbReference type="InterPro" id="IPR015963">
    <property type="entry name" value="Uridylate_kinase_bac"/>
</dbReference>
<dbReference type="NCBIfam" id="TIGR02075">
    <property type="entry name" value="pyrH_bact"/>
    <property type="match status" value="1"/>
</dbReference>
<dbReference type="PANTHER" id="PTHR42833">
    <property type="entry name" value="URIDYLATE KINASE"/>
    <property type="match status" value="1"/>
</dbReference>
<dbReference type="PANTHER" id="PTHR42833:SF4">
    <property type="entry name" value="URIDYLATE KINASE PUMPKIN, CHLOROPLASTIC"/>
    <property type="match status" value="1"/>
</dbReference>
<dbReference type="Pfam" id="PF00696">
    <property type="entry name" value="AA_kinase"/>
    <property type="match status" value="1"/>
</dbReference>
<dbReference type="PIRSF" id="PIRSF005650">
    <property type="entry name" value="Uridylate_kin"/>
    <property type="match status" value="1"/>
</dbReference>
<dbReference type="SUPFAM" id="SSF53633">
    <property type="entry name" value="Carbamate kinase-like"/>
    <property type="match status" value="1"/>
</dbReference>
<sequence length="247" mass="26608">MAQQGSGYQARYKRILLKLSGEALMGSEEFGIDPKVLDRMALEVGQLVGIGVQVGLVIGGGNLFRGAALSAAGMDRVTGDHMGMLATVMNALAMRDALERANISAIVMSAISMVGVTDHYDRRKAMRHLNSKEVVIFAAGTGNPFFTTDSAACLRAIEIDADVVLKATKVDGVYTADPFKDPHAEKFDHLTYDEVLDRKLGVMDLTAICLCRDHKMPLRVFNMNKPGALLNIVHGGAEGTLIEEGEQ</sequence>
<keyword id="KW-0067">ATP-binding</keyword>
<keyword id="KW-0963">Cytoplasm</keyword>
<keyword id="KW-0418">Kinase</keyword>
<keyword id="KW-0547">Nucleotide-binding</keyword>
<keyword id="KW-0665">Pyrimidine biosynthesis</keyword>
<keyword id="KW-0808">Transferase</keyword>
<comment type="function">
    <text evidence="1">Catalyzes the reversible phosphorylation of UMP to UDP.</text>
</comment>
<comment type="catalytic activity">
    <reaction evidence="1">
        <text>UMP + ATP = UDP + ADP</text>
        <dbReference type="Rhea" id="RHEA:24400"/>
        <dbReference type="ChEBI" id="CHEBI:30616"/>
        <dbReference type="ChEBI" id="CHEBI:57865"/>
        <dbReference type="ChEBI" id="CHEBI:58223"/>
        <dbReference type="ChEBI" id="CHEBI:456216"/>
        <dbReference type="EC" id="2.7.4.22"/>
    </reaction>
</comment>
<comment type="activity regulation">
    <text evidence="1">Inhibited by UTP.</text>
</comment>
<comment type="pathway">
    <text evidence="1">Pyrimidine metabolism; CTP biosynthesis via de novo pathway; UDP from UMP (UMPK route): step 1/1.</text>
</comment>
<comment type="subunit">
    <text evidence="1">Homohexamer.</text>
</comment>
<comment type="subcellular location">
    <subcellularLocation>
        <location evidence="1">Cytoplasm</location>
    </subcellularLocation>
</comment>
<comment type="similarity">
    <text evidence="1">Belongs to the UMP kinase family.</text>
</comment>
<reference key="1">
    <citation type="journal article" date="2005" name="Nat. Biotechnol.">
        <title>Complete genome sequence of the plant commensal Pseudomonas fluorescens Pf-5.</title>
        <authorList>
            <person name="Paulsen I.T."/>
            <person name="Press C.M."/>
            <person name="Ravel J."/>
            <person name="Kobayashi D.Y."/>
            <person name="Myers G.S.A."/>
            <person name="Mavrodi D.V."/>
            <person name="DeBoy R.T."/>
            <person name="Seshadri R."/>
            <person name="Ren Q."/>
            <person name="Madupu R."/>
            <person name="Dodson R.J."/>
            <person name="Durkin A.S."/>
            <person name="Brinkac L.M."/>
            <person name="Daugherty S.C."/>
            <person name="Sullivan S.A."/>
            <person name="Rosovitz M.J."/>
            <person name="Gwinn M.L."/>
            <person name="Zhou L."/>
            <person name="Schneider D.J."/>
            <person name="Cartinhour S.W."/>
            <person name="Nelson W.C."/>
            <person name="Weidman J."/>
            <person name="Watkins K."/>
            <person name="Tran K."/>
            <person name="Khouri H."/>
            <person name="Pierson E.A."/>
            <person name="Pierson L.S. III"/>
            <person name="Thomashow L.S."/>
            <person name="Loper J.E."/>
        </authorList>
    </citation>
    <scope>NUCLEOTIDE SEQUENCE [LARGE SCALE GENOMIC DNA]</scope>
    <source>
        <strain>ATCC BAA-477 / NRRL B-23932 / Pf-5</strain>
    </source>
</reference>
<gene>
    <name evidence="1" type="primary">pyrH</name>
    <name type="ordered locus">PFL_1178</name>
</gene>
<evidence type="ECO:0000255" key="1">
    <source>
        <dbReference type="HAMAP-Rule" id="MF_01220"/>
    </source>
</evidence>